<reference key="1">
    <citation type="journal article" date="1999" name="Mol. Microbiol.">
        <title>Teichuronic acid operon of Bacillus subtilis 168.</title>
        <authorList>
            <person name="Soldo B."/>
            <person name="Lazarevic V."/>
            <person name="Pagni M."/>
            <person name="Karamata D."/>
        </authorList>
    </citation>
    <scope>NUCLEOTIDE SEQUENCE [GENOMIC DNA]</scope>
    <source>
        <strain>168</strain>
    </source>
</reference>
<reference key="2">
    <citation type="journal article" date="1997" name="Nature">
        <title>The complete genome sequence of the Gram-positive bacterium Bacillus subtilis.</title>
        <authorList>
            <person name="Kunst F."/>
            <person name="Ogasawara N."/>
            <person name="Moszer I."/>
            <person name="Albertini A.M."/>
            <person name="Alloni G."/>
            <person name="Azevedo V."/>
            <person name="Bertero M.G."/>
            <person name="Bessieres P."/>
            <person name="Bolotin A."/>
            <person name="Borchert S."/>
            <person name="Borriss R."/>
            <person name="Boursier L."/>
            <person name="Brans A."/>
            <person name="Braun M."/>
            <person name="Brignell S.C."/>
            <person name="Bron S."/>
            <person name="Brouillet S."/>
            <person name="Bruschi C.V."/>
            <person name="Caldwell B."/>
            <person name="Capuano V."/>
            <person name="Carter N.M."/>
            <person name="Choi S.-K."/>
            <person name="Codani J.-J."/>
            <person name="Connerton I.F."/>
            <person name="Cummings N.J."/>
            <person name="Daniel R.A."/>
            <person name="Denizot F."/>
            <person name="Devine K.M."/>
            <person name="Duesterhoeft A."/>
            <person name="Ehrlich S.D."/>
            <person name="Emmerson P.T."/>
            <person name="Entian K.-D."/>
            <person name="Errington J."/>
            <person name="Fabret C."/>
            <person name="Ferrari E."/>
            <person name="Foulger D."/>
            <person name="Fritz C."/>
            <person name="Fujita M."/>
            <person name="Fujita Y."/>
            <person name="Fuma S."/>
            <person name="Galizzi A."/>
            <person name="Galleron N."/>
            <person name="Ghim S.-Y."/>
            <person name="Glaser P."/>
            <person name="Goffeau A."/>
            <person name="Golightly E.J."/>
            <person name="Grandi G."/>
            <person name="Guiseppi G."/>
            <person name="Guy B.J."/>
            <person name="Haga K."/>
            <person name="Haiech J."/>
            <person name="Harwood C.R."/>
            <person name="Henaut A."/>
            <person name="Hilbert H."/>
            <person name="Holsappel S."/>
            <person name="Hosono S."/>
            <person name="Hullo M.-F."/>
            <person name="Itaya M."/>
            <person name="Jones L.-M."/>
            <person name="Joris B."/>
            <person name="Karamata D."/>
            <person name="Kasahara Y."/>
            <person name="Klaerr-Blanchard M."/>
            <person name="Klein C."/>
            <person name="Kobayashi Y."/>
            <person name="Koetter P."/>
            <person name="Koningstein G."/>
            <person name="Krogh S."/>
            <person name="Kumano M."/>
            <person name="Kurita K."/>
            <person name="Lapidus A."/>
            <person name="Lardinois S."/>
            <person name="Lauber J."/>
            <person name="Lazarevic V."/>
            <person name="Lee S.-M."/>
            <person name="Levine A."/>
            <person name="Liu H."/>
            <person name="Masuda S."/>
            <person name="Mauel C."/>
            <person name="Medigue C."/>
            <person name="Medina N."/>
            <person name="Mellado R.P."/>
            <person name="Mizuno M."/>
            <person name="Moestl D."/>
            <person name="Nakai S."/>
            <person name="Noback M."/>
            <person name="Noone D."/>
            <person name="O'Reilly M."/>
            <person name="Ogawa K."/>
            <person name="Ogiwara A."/>
            <person name="Oudega B."/>
            <person name="Park S.-H."/>
            <person name="Parro V."/>
            <person name="Pohl T.M."/>
            <person name="Portetelle D."/>
            <person name="Porwollik S."/>
            <person name="Prescott A.M."/>
            <person name="Presecan E."/>
            <person name="Pujic P."/>
            <person name="Purnelle B."/>
            <person name="Rapoport G."/>
            <person name="Rey M."/>
            <person name="Reynolds S."/>
            <person name="Rieger M."/>
            <person name="Rivolta C."/>
            <person name="Rocha E."/>
            <person name="Roche B."/>
            <person name="Rose M."/>
            <person name="Sadaie Y."/>
            <person name="Sato T."/>
            <person name="Scanlan E."/>
            <person name="Schleich S."/>
            <person name="Schroeter R."/>
            <person name="Scoffone F."/>
            <person name="Sekiguchi J."/>
            <person name="Sekowska A."/>
            <person name="Seror S.J."/>
            <person name="Serror P."/>
            <person name="Shin B.-S."/>
            <person name="Soldo B."/>
            <person name="Sorokin A."/>
            <person name="Tacconi E."/>
            <person name="Takagi T."/>
            <person name="Takahashi H."/>
            <person name="Takemaru K."/>
            <person name="Takeuchi M."/>
            <person name="Tamakoshi A."/>
            <person name="Tanaka T."/>
            <person name="Terpstra P."/>
            <person name="Tognoni A."/>
            <person name="Tosato V."/>
            <person name="Uchiyama S."/>
            <person name="Vandenbol M."/>
            <person name="Vannier F."/>
            <person name="Vassarotti A."/>
            <person name="Viari A."/>
            <person name="Wambutt R."/>
            <person name="Wedler E."/>
            <person name="Wedler H."/>
            <person name="Weitzenegger T."/>
            <person name="Winters P."/>
            <person name="Wipat A."/>
            <person name="Yamamoto H."/>
            <person name="Yamane K."/>
            <person name="Yasumoto K."/>
            <person name="Yata K."/>
            <person name="Yoshida K."/>
            <person name="Yoshikawa H.-F."/>
            <person name="Zumstein E."/>
            <person name="Yoshikawa H."/>
            <person name="Danchin A."/>
        </authorList>
    </citation>
    <scope>NUCLEOTIDE SEQUENCE [LARGE SCALE GENOMIC DNA]</scope>
    <source>
        <strain>168</strain>
    </source>
</reference>
<protein>
    <recommendedName>
        <fullName>Putative teichuronic acid biosynthesis glycosyltransferase TuaC</fullName>
        <ecNumber>2.4.-.-</ecNumber>
    </recommendedName>
</protein>
<sequence>MKILWITSVYPSSMKPGEGVFHETQVQELQKLGLDITVICPRPFHSAPVRMLKKTYRKKDVRPEYEIRKGIPVYRPFYRAVPGQLKWAQPHRRIASAVLKTMKQRDLYPDLIHAHFAMPSGGAAAVVSESAQIPYVLTLHGSDVNVYPHYSKGAFKAFKRAVGSASVVLAVSHKLQEEAKKLSGFDSSVLPIGIQLSRFQGNEETKEEIRKRLGLPLDQRLAVYVGRLVREKGIFELSEAIESLQDSPKAVFVGDGPAKSTLTQKGHIVTGQVPNHQVRDYLLAADLFVLPSYSEGMPTVVIEALALRVPVICTDVGGVSSLFGKHQHLLIKPKSAQALAEAITRYEHEQIWKPEVADDLYETVQAQFDAGKNAKALHHQYQTVTKTSV</sequence>
<dbReference type="EC" id="2.4.-.-"/>
<dbReference type="EMBL" id="AF015609">
    <property type="protein sequence ID" value="AAB94864.1"/>
    <property type="molecule type" value="Genomic_DNA"/>
</dbReference>
<dbReference type="EMBL" id="AL009126">
    <property type="protein sequence ID" value="CAB15576.1"/>
    <property type="molecule type" value="Genomic_DNA"/>
</dbReference>
<dbReference type="PIR" id="E69727">
    <property type="entry name" value="E69727"/>
</dbReference>
<dbReference type="RefSeq" id="NP_391439.1">
    <property type="nucleotide sequence ID" value="NC_000964.3"/>
</dbReference>
<dbReference type="RefSeq" id="WP_003242807.1">
    <property type="nucleotide sequence ID" value="NZ_OZ025638.1"/>
</dbReference>
<dbReference type="SMR" id="O32272"/>
<dbReference type="FunCoup" id="O32272">
    <property type="interactions" value="27"/>
</dbReference>
<dbReference type="STRING" id="224308.BSU35590"/>
<dbReference type="CAZy" id="GT4">
    <property type="family name" value="Glycosyltransferase Family 4"/>
</dbReference>
<dbReference type="PaxDb" id="224308-BSU35590"/>
<dbReference type="DNASU" id="936771"/>
<dbReference type="EnsemblBacteria" id="CAB15576">
    <property type="protein sequence ID" value="CAB15576"/>
    <property type="gene ID" value="BSU_35590"/>
</dbReference>
<dbReference type="GeneID" id="936771"/>
<dbReference type="KEGG" id="bsu:BSU35590"/>
<dbReference type="PATRIC" id="fig|224308.179.peg.3850"/>
<dbReference type="eggNOG" id="COG0297">
    <property type="taxonomic scope" value="Bacteria"/>
</dbReference>
<dbReference type="eggNOG" id="COG0438">
    <property type="taxonomic scope" value="Bacteria"/>
</dbReference>
<dbReference type="InParanoid" id="O32272"/>
<dbReference type="OrthoDB" id="179766at2"/>
<dbReference type="PhylomeDB" id="O32272"/>
<dbReference type="BioCyc" id="BSUB:BSU35590-MONOMER"/>
<dbReference type="BioCyc" id="MetaCyc:BSU35590-MONOMER"/>
<dbReference type="UniPathway" id="UPA00844"/>
<dbReference type="Proteomes" id="UP000001570">
    <property type="component" value="Chromosome"/>
</dbReference>
<dbReference type="GO" id="GO:0016757">
    <property type="term" value="F:glycosyltransferase activity"/>
    <property type="evidence" value="ECO:0000318"/>
    <property type="project" value="GO_Central"/>
</dbReference>
<dbReference type="GO" id="GO:0071555">
    <property type="term" value="P:cell wall organization"/>
    <property type="evidence" value="ECO:0007669"/>
    <property type="project" value="UniProtKB-KW"/>
</dbReference>
<dbReference type="GO" id="GO:0050845">
    <property type="term" value="P:teichuronic acid biosynthetic process"/>
    <property type="evidence" value="ECO:0007669"/>
    <property type="project" value="UniProtKB-UniPathway"/>
</dbReference>
<dbReference type="CDD" id="cd03798">
    <property type="entry name" value="GT4_WlbH-like"/>
    <property type="match status" value="1"/>
</dbReference>
<dbReference type="Gene3D" id="3.40.50.2000">
    <property type="entry name" value="Glycogen Phosphorylase B"/>
    <property type="match status" value="2"/>
</dbReference>
<dbReference type="InterPro" id="IPR001296">
    <property type="entry name" value="Glyco_trans_1"/>
</dbReference>
<dbReference type="InterPro" id="IPR028098">
    <property type="entry name" value="Glyco_trans_4-like_N"/>
</dbReference>
<dbReference type="InterPro" id="IPR050194">
    <property type="entry name" value="Glycosyltransferase_grp1"/>
</dbReference>
<dbReference type="NCBIfam" id="NF047684">
    <property type="entry name" value="TeichurnBiosyTuaC"/>
    <property type="match status" value="1"/>
</dbReference>
<dbReference type="PANTHER" id="PTHR45947">
    <property type="entry name" value="SULFOQUINOVOSYL TRANSFERASE SQD2"/>
    <property type="match status" value="1"/>
</dbReference>
<dbReference type="PANTHER" id="PTHR45947:SF15">
    <property type="entry name" value="TEICHURONIC ACID BIOSYNTHESIS GLYCOSYLTRANSFERASE TUAC-RELATED"/>
    <property type="match status" value="1"/>
</dbReference>
<dbReference type="Pfam" id="PF13439">
    <property type="entry name" value="Glyco_transf_4"/>
    <property type="match status" value="1"/>
</dbReference>
<dbReference type="Pfam" id="PF00534">
    <property type="entry name" value="Glycos_transf_1"/>
    <property type="match status" value="1"/>
</dbReference>
<dbReference type="SUPFAM" id="SSF53756">
    <property type="entry name" value="UDP-Glycosyltransferase/glycogen phosphorylase"/>
    <property type="match status" value="1"/>
</dbReference>
<keyword id="KW-0961">Cell wall biogenesis/degradation</keyword>
<keyword id="KW-0328">Glycosyltransferase</keyword>
<keyword id="KW-1185">Reference proteome</keyword>
<keyword id="KW-0346">Stress response</keyword>
<keyword id="KW-0808">Transferase</keyword>
<gene>
    <name type="primary">tuaC</name>
    <name type="synonym">yvhC</name>
    <name type="ordered locus">BSU35590</name>
</gene>
<comment type="pathway">
    <text>Cell wall biogenesis; teichuronic acid biosynthesis.</text>
</comment>
<comment type="induction">
    <text>By phosphate starvation, via the PhoP/PhoR two-component regulatory system.</text>
</comment>
<comment type="miscellaneous">
    <text>The nature of the anionic polymer present in the cell wall of B.subtilis depends on phosphate availability. Under phosphate-replete growth conditions teichoic acids are present, whereas under phosphate-depleted conditions, at least part of the wall teichoic acid is replaced with teichuronic acid, a non-phosphate containing anionic polymer. The synthesis of teichuronic acid is accompanied by degradation of teichoic acid and reutilization of liberated phosphate for other cellular processes such as nucleic acid synthesis.</text>
</comment>
<comment type="similarity">
    <text evidence="1">Belongs to the glycosyltransferase group 1 family. Glycosyltransferase 4 subfamily.</text>
</comment>
<feature type="chain" id="PRO_0000080309" description="Putative teichuronic acid biosynthesis glycosyltransferase TuaC">
    <location>
        <begin position="1"/>
        <end position="389"/>
    </location>
</feature>
<name>TUAC_BACSU</name>
<evidence type="ECO:0000305" key="1"/>
<organism>
    <name type="scientific">Bacillus subtilis (strain 168)</name>
    <dbReference type="NCBI Taxonomy" id="224308"/>
    <lineage>
        <taxon>Bacteria</taxon>
        <taxon>Bacillati</taxon>
        <taxon>Bacillota</taxon>
        <taxon>Bacilli</taxon>
        <taxon>Bacillales</taxon>
        <taxon>Bacillaceae</taxon>
        <taxon>Bacillus</taxon>
    </lineage>
</organism>
<accession>O32272</accession>
<proteinExistence type="evidence at transcript level"/>